<evidence type="ECO:0000250" key="1">
    <source>
        <dbReference type="UniProtKB" id="Q46EH4"/>
    </source>
</evidence>
<evidence type="ECO:0000255" key="2">
    <source>
        <dbReference type="PROSITE-ProRule" id="PRU00666"/>
    </source>
</evidence>
<evidence type="ECO:0000255" key="3">
    <source>
        <dbReference type="PROSITE-ProRule" id="PRU00667"/>
    </source>
</evidence>
<evidence type="ECO:0000303" key="4">
    <source>
    </source>
</evidence>
<evidence type="ECO:0000305" key="5"/>
<evidence type="ECO:0000305" key="6">
    <source>
    </source>
</evidence>
<evidence type="ECO:0000312" key="7">
    <source>
        <dbReference type="EMBL" id="BAE84944.1"/>
    </source>
</evidence>
<organism>
    <name type="scientific">Desulfitobacterium hafniense (strain Y51)</name>
    <dbReference type="NCBI Taxonomy" id="138119"/>
    <lineage>
        <taxon>Bacteria</taxon>
        <taxon>Bacillati</taxon>
        <taxon>Bacillota</taxon>
        <taxon>Clostridia</taxon>
        <taxon>Eubacteriales</taxon>
        <taxon>Desulfitobacteriaceae</taxon>
        <taxon>Desulfitobacterium</taxon>
    </lineage>
</organism>
<name>MTGC_DESHY</name>
<dbReference type="EMBL" id="AP008230">
    <property type="protein sequence ID" value="BAE84944.1"/>
    <property type="molecule type" value="Genomic_DNA"/>
</dbReference>
<dbReference type="SMR" id="Q24SP8"/>
<dbReference type="STRING" id="138119.DSY3155"/>
<dbReference type="KEGG" id="dsy:DSY3155"/>
<dbReference type="eggNOG" id="COG5012">
    <property type="taxonomic scope" value="Bacteria"/>
</dbReference>
<dbReference type="HOGENOM" id="CLU_082102_2_0_9"/>
<dbReference type="BioCyc" id="MetaCyc:MONOMER-21033"/>
<dbReference type="Proteomes" id="UP000001946">
    <property type="component" value="Chromosome"/>
</dbReference>
<dbReference type="GO" id="GO:0005829">
    <property type="term" value="C:cytosol"/>
    <property type="evidence" value="ECO:0007669"/>
    <property type="project" value="TreeGrafter"/>
</dbReference>
<dbReference type="GO" id="GO:0031419">
    <property type="term" value="F:cobalamin binding"/>
    <property type="evidence" value="ECO:0007669"/>
    <property type="project" value="InterPro"/>
</dbReference>
<dbReference type="GO" id="GO:0050897">
    <property type="term" value="F:cobalt ion binding"/>
    <property type="evidence" value="ECO:0007669"/>
    <property type="project" value="InterPro"/>
</dbReference>
<dbReference type="GO" id="GO:0008705">
    <property type="term" value="F:methionine synthase activity"/>
    <property type="evidence" value="ECO:0007669"/>
    <property type="project" value="TreeGrafter"/>
</dbReference>
<dbReference type="GO" id="GO:0050667">
    <property type="term" value="P:homocysteine metabolic process"/>
    <property type="evidence" value="ECO:0007669"/>
    <property type="project" value="TreeGrafter"/>
</dbReference>
<dbReference type="GO" id="GO:0015948">
    <property type="term" value="P:methanogenesis"/>
    <property type="evidence" value="ECO:0007669"/>
    <property type="project" value="InterPro"/>
</dbReference>
<dbReference type="GO" id="GO:0006730">
    <property type="term" value="P:one-carbon metabolic process"/>
    <property type="evidence" value="ECO:0007669"/>
    <property type="project" value="UniProtKB-KW"/>
</dbReference>
<dbReference type="GO" id="GO:0046653">
    <property type="term" value="P:tetrahydrofolate metabolic process"/>
    <property type="evidence" value="ECO:0007669"/>
    <property type="project" value="TreeGrafter"/>
</dbReference>
<dbReference type="CDD" id="cd02070">
    <property type="entry name" value="corrinoid_protein_B12-BD"/>
    <property type="match status" value="1"/>
</dbReference>
<dbReference type="FunFam" id="3.40.50.280:FF:000003">
    <property type="entry name" value="Dimethylamine methyltransferase corrinoid protein"/>
    <property type="match status" value="1"/>
</dbReference>
<dbReference type="Gene3D" id="3.40.50.280">
    <property type="entry name" value="Cobalamin-binding domain"/>
    <property type="match status" value="1"/>
</dbReference>
<dbReference type="Gene3D" id="1.10.1240.10">
    <property type="entry name" value="Methionine synthase domain"/>
    <property type="match status" value="1"/>
</dbReference>
<dbReference type="InterPro" id="IPR003759">
    <property type="entry name" value="Cbl-bd_cap"/>
</dbReference>
<dbReference type="InterPro" id="IPR006158">
    <property type="entry name" value="Cobalamin-bd"/>
</dbReference>
<dbReference type="InterPro" id="IPR036724">
    <property type="entry name" value="Cobalamin-bd_sf"/>
</dbReference>
<dbReference type="InterPro" id="IPR012741">
    <property type="entry name" value="Corrinoid_p"/>
</dbReference>
<dbReference type="InterPro" id="IPR050554">
    <property type="entry name" value="Met_Synthase/Corrinoid"/>
</dbReference>
<dbReference type="InterPro" id="IPR036594">
    <property type="entry name" value="Meth_synthase_dom"/>
</dbReference>
<dbReference type="NCBIfam" id="TIGR02370">
    <property type="entry name" value="pyl_corrinoid"/>
    <property type="match status" value="1"/>
</dbReference>
<dbReference type="PANTHER" id="PTHR45833">
    <property type="entry name" value="METHIONINE SYNTHASE"/>
    <property type="match status" value="1"/>
</dbReference>
<dbReference type="PANTHER" id="PTHR45833:SF1">
    <property type="entry name" value="METHIONINE SYNTHASE"/>
    <property type="match status" value="1"/>
</dbReference>
<dbReference type="Pfam" id="PF02310">
    <property type="entry name" value="B12-binding"/>
    <property type="match status" value="1"/>
</dbReference>
<dbReference type="Pfam" id="PF02607">
    <property type="entry name" value="B12-binding_2"/>
    <property type="match status" value="1"/>
</dbReference>
<dbReference type="SMART" id="SM01018">
    <property type="entry name" value="B12-binding_2"/>
    <property type="match status" value="1"/>
</dbReference>
<dbReference type="SUPFAM" id="SSF52242">
    <property type="entry name" value="Cobalamin (vitamin B12)-binding domain"/>
    <property type="match status" value="1"/>
</dbReference>
<dbReference type="SUPFAM" id="SSF47644">
    <property type="entry name" value="Methionine synthase domain"/>
    <property type="match status" value="1"/>
</dbReference>
<dbReference type="PROSITE" id="PS51332">
    <property type="entry name" value="B12_BINDING"/>
    <property type="match status" value="1"/>
</dbReference>
<dbReference type="PROSITE" id="PS51337">
    <property type="entry name" value="B12_BINDING_NTER"/>
    <property type="match status" value="1"/>
</dbReference>
<protein>
    <recommendedName>
        <fullName evidence="4">Corrinoid protein DSY3155</fullName>
    </recommendedName>
</protein>
<sequence length="216" mass="22943">MIMSLLDELKQAIIDGDEDIVAELSQKAVDEDLDLVDTVQSGLVKGIEVVGTAWKEGEMFLPDVMMSAEAMKVGLAILEPEIAKKGMSEGESKGKIVLGTVEGDIHDIGKNITGAMFTAAGYKVIDLGTDIKAEGFVAKAQEVGADIIGASALLTTTMIKQKELIEYLKEKNLRDSYKVLVGGGPTSQVWADEIGADGWAETADDAVELANKILGK</sequence>
<feature type="chain" id="PRO_0000441379" description="Corrinoid protein DSY3155">
    <location>
        <begin position="1"/>
        <end position="216"/>
    </location>
</feature>
<feature type="domain" description="B12-binding N-terminal" evidence="3">
    <location>
        <begin position="1"/>
        <end position="90"/>
    </location>
</feature>
<feature type="domain" description="B12-binding" evidence="2">
    <location>
        <begin position="93"/>
        <end position="216"/>
    </location>
</feature>
<feature type="binding site" description="axial binding residue" evidence="1">
    <location>
        <position position="106"/>
    </location>
    <ligand>
        <name>methylcob(III)alamin</name>
        <dbReference type="ChEBI" id="CHEBI:28115"/>
    </ligand>
    <ligandPart>
        <name>Co</name>
        <dbReference type="ChEBI" id="CHEBI:27638"/>
    </ligandPart>
</feature>
<gene>
    <name evidence="7" type="ordered locus">DSY3155</name>
</gene>
<accession>Q24SP8</accession>
<reference key="1">
    <citation type="journal article" date="2006" name="J. Bacteriol.">
        <title>Complete genome sequence of the dehalorespiring bacterium Desulfitobacterium hafniense Y51 and comparison with Dehalococcoides ethenogenes 195.</title>
        <authorList>
            <person name="Nonaka H."/>
            <person name="Keresztes G."/>
            <person name="Shinoda Y."/>
            <person name="Ikenaga Y."/>
            <person name="Abe M."/>
            <person name="Naito K."/>
            <person name="Inatomi K."/>
            <person name="Furukawa K."/>
            <person name="Inui M."/>
            <person name="Yukawa H."/>
        </authorList>
    </citation>
    <scope>NUCLEOTIDE SEQUENCE [LARGE SCALE GENOMIC DNA]</scope>
    <source>
        <strain>Y51</strain>
    </source>
</reference>
<reference key="2">
    <citation type="journal article" date="2014" name="Proc. Natl. Acad. Sci. U.S.A.">
        <title>A nonpyrrolysine member of the widely distributed trimethylamine methyltransferase family is a glycine betaine methyltransferase.</title>
        <authorList>
            <person name="Ticak T."/>
            <person name="Kountz D.J."/>
            <person name="Girosky K.E."/>
            <person name="Krzycki J.A."/>
            <person name="Ferguson D.J. Jr."/>
        </authorList>
    </citation>
    <scope>FUNCTION</scope>
    <source>
        <strain>Y51</strain>
    </source>
</reference>
<comment type="function">
    <text evidence="6">Probably harbors a corrinoid prosthetic group and acts as a methyl group carrier between MtgB and MtgA. A methyl group from glycine betaine is likely first transferred to the corrinoid prosthetic group of the enzyme by MtgB, and then transferred to tetrahydrofolate (THF) by MtgA. The methyl group may then be ultimately converted to carbon dioxide, and its oxidation would also provide reducing equivalents for anaerobic respiration. Thus, may function in the pathway that allows anaerobic methylotrophic growth of D.hafniense using glycine betaine.</text>
</comment>
<comment type="similarity">
    <text evidence="5">Belongs to the methylamine corrinoid protein family.</text>
</comment>
<keyword id="KW-0170">Cobalt</keyword>
<keyword id="KW-0479">Metal-binding</keyword>
<keyword id="KW-0554">One-carbon metabolism</keyword>
<keyword id="KW-1185">Reference proteome</keyword>
<proteinExistence type="inferred from homology"/>